<evidence type="ECO:0000255" key="1">
    <source>
        <dbReference type="HAMAP-Rule" id="MF_00159"/>
    </source>
</evidence>
<feature type="chain" id="PRO_1000097183" description="4-hydroxy-3-methylbut-2-en-1-yl diphosphate synthase (flavodoxin)">
    <location>
        <begin position="1"/>
        <end position="372"/>
    </location>
</feature>
<feature type="binding site" evidence="1">
    <location>
        <position position="270"/>
    </location>
    <ligand>
        <name>[4Fe-4S] cluster</name>
        <dbReference type="ChEBI" id="CHEBI:49883"/>
    </ligand>
</feature>
<feature type="binding site" evidence="1">
    <location>
        <position position="273"/>
    </location>
    <ligand>
        <name>[4Fe-4S] cluster</name>
        <dbReference type="ChEBI" id="CHEBI:49883"/>
    </ligand>
</feature>
<feature type="binding site" evidence="1">
    <location>
        <position position="305"/>
    </location>
    <ligand>
        <name>[4Fe-4S] cluster</name>
        <dbReference type="ChEBI" id="CHEBI:49883"/>
    </ligand>
</feature>
<feature type="binding site" evidence="1">
    <location>
        <position position="312"/>
    </location>
    <ligand>
        <name>[4Fe-4S] cluster</name>
        <dbReference type="ChEBI" id="CHEBI:49883"/>
    </ligand>
</feature>
<gene>
    <name evidence="1" type="primary">ispG</name>
    <name type="ordered locus">SNSL254_A2718</name>
</gene>
<proteinExistence type="inferred from homology"/>
<accession>B4T0P9</accession>
<sequence>MHNQAPIQRRKSTRIYVGNVPIGDGAPIAVQSMTNTRTTDVEATVNQIKALERVGADIVRVSVPTMDAAEAFKLIKQQVNVPLVADIHFDYRIALKVAEYGVDCLRINPGNIGNEERIRMVVDCARDKNIPIRIGVNAGSLEKDLQEKYGEPTPQALLESAMRHVDHLDRLNFDQFKVSVKASDVFLAVESYRLLAKQIDQPLHLGITEAGGARSGAVKSAIGLGLLLSEGIGDTLRVSLAADPVEEIKVGFDILKSLRIRARGINFIACPTCSRQEFDVIGTVNALEQRLEDIITPMDVSIIGCVVNGPGEALVSTLGVTGGNKKSGLYEDGVRKDRLDNDDMIAQLESRIRAKASQLDEARRIDVLQVEK</sequence>
<name>ISPG_SALNS</name>
<protein>
    <recommendedName>
        <fullName evidence="1">4-hydroxy-3-methylbut-2-en-1-yl diphosphate synthase (flavodoxin)</fullName>
        <ecNumber evidence="1">1.17.7.3</ecNumber>
    </recommendedName>
    <alternativeName>
        <fullName evidence="1">1-hydroxy-2-methyl-2-(E)-butenyl 4-diphosphate synthase</fullName>
    </alternativeName>
</protein>
<reference key="1">
    <citation type="journal article" date="2011" name="J. Bacteriol.">
        <title>Comparative genomics of 28 Salmonella enterica isolates: evidence for CRISPR-mediated adaptive sublineage evolution.</title>
        <authorList>
            <person name="Fricke W.F."/>
            <person name="Mammel M.K."/>
            <person name="McDermott P.F."/>
            <person name="Tartera C."/>
            <person name="White D.G."/>
            <person name="Leclerc J.E."/>
            <person name="Ravel J."/>
            <person name="Cebula T.A."/>
        </authorList>
    </citation>
    <scope>NUCLEOTIDE SEQUENCE [LARGE SCALE GENOMIC DNA]</scope>
    <source>
        <strain>SL254</strain>
    </source>
</reference>
<organism>
    <name type="scientific">Salmonella newport (strain SL254)</name>
    <dbReference type="NCBI Taxonomy" id="423368"/>
    <lineage>
        <taxon>Bacteria</taxon>
        <taxon>Pseudomonadati</taxon>
        <taxon>Pseudomonadota</taxon>
        <taxon>Gammaproteobacteria</taxon>
        <taxon>Enterobacterales</taxon>
        <taxon>Enterobacteriaceae</taxon>
        <taxon>Salmonella</taxon>
    </lineage>
</organism>
<dbReference type="EC" id="1.17.7.3" evidence="1"/>
<dbReference type="EMBL" id="CP001113">
    <property type="protein sequence ID" value="ACF61194.1"/>
    <property type="molecule type" value="Genomic_DNA"/>
</dbReference>
<dbReference type="RefSeq" id="WP_000551804.1">
    <property type="nucleotide sequence ID" value="NZ_CCMR01000001.1"/>
</dbReference>
<dbReference type="SMR" id="B4T0P9"/>
<dbReference type="KEGG" id="see:SNSL254_A2718"/>
<dbReference type="HOGENOM" id="CLU_042258_0_0_6"/>
<dbReference type="UniPathway" id="UPA00056">
    <property type="reaction ID" value="UER00096"/>
</dbReference>
<dbReference type="Proteomes" id="UP000008824">
    <property type="component" value="Chromosome"/>
</dbReference>
<dbReference type="GO" id="GO:0051539">
    <property type="term" value="F:4 iron, 4 sulfur cluster binding"/>
    <property type="evidence" value="ECO:0007669"/>
    <property type="project" value="UniProtKB-UniRule"/>
</dbReference>
<dbReference type="GO" id="GO:0046429">
    <property type="term" value="F:4-hydroxy-3-methylbut-2-en-1-yl diphosphate synthase activity (ferredoxin)"/>
    <property type="evidence" value="ECO:0007669"/>
    <property type="project" value="UniProtKB-UniRule"/>
</dbReference>
<dbReference type="GO" id="GO:0141197">
    <property type="term" value="F:4-hydroxy-3-methylbut-2-enyl-diphosphate synthase activity (flavodoxin)"/>
    <property type="evidence" value="ECO:0007669"/>
    <property type="project" value="UniProtKB-EC"/>
</dbReference>
<dbReference type="GO" id="GO:0005506">
    <property type="term" value="F:iron ion binding"/>
    <property type="evidence" value="ECO:0007669"/>
    <property type="project" value="InterPro"/>
</dbReference>
<dbReference type="GO" id="GO:0019288">
    <property type="term" value="P:isopentenyl diphosphate biosynthetic process, methylerythritol 4-phosphate pathway"/>
    <property type="evidence" value="ECO:0007669"/>
    <property type="project" value="UniProtKB-UniRule"/>
</dbReference>
<dbReference type="GO" id="GO:0016114">
    <property type="term" value="P:terpenoid biosynthetic process"/>
    <property type="evidence" value="ECO:0007669"/>
    <property type="project" value="InterPro"/>
</dbReference>
<dbReference type="FunFam" id="3.20.20.20:FF:000001">
    <property type="entry name" value="4-hydroxy-3-methylbut-2-en-1-yl diphosphate synthase (flavodoxin)"/>
    <property type="match status" value="1"/>
</dbReference>
<dbReference type="FunFam" id="3.30.413.10:FF:000002">
    <property type="entry name" value="4-hydroxy-3-methylbut-2-en-1-yl diphosphate synthase (flavodoxin)"/>
    <property type="match status" value="1"/>
</dbReference>
<dbReference type="Gene3D" id="3.20.20.20">
    <property type="entry name" value="Dihydropteroate synthase-like"/>
    <property type="match status" value="1"/>
</dbReference>
<dbReference type="Gene3D" id="3.30.413.10">
    <property type="entry name" value="Sulfite Reductase Hemoprotein, domain 1"/>
    <property type="match status" value="1"/>
</dbReference>
<dbReference type="HAMAP" id="MF_00159">
    <property type="entry name" value="IspG"/>
    <property type="match status" value="1"/>
</dbReference>
<dbReference type="InterPro" id="IPR011005">
    <property type="entry name" value="Dihydropteroate_synth-like_sf"/>
</dbReference>
<dbReference type="InterPro" id="IPR016425">
    <property type="entry name" value="IspG_bac"/>
</dbReference>
<dbReference type="InterPro" id="IPR004588">
    <property type="entry name" value="IspG_bac-typ"/>
</dbReference>
<dbReference type="InterPro" id="IPR045854">
    <property type="entry name" value="NO2/SO3_Rdtase_4Fe4S_sf"/>
</dbReference>
<dbReference type="NCBIfam" id="TIGR00612">
    <property type="entry name" value="ispG_gcpE"/>
    <property type="match status" value="1"/>
</dbReference>
<dbReference type="NCBIfam" id="NF001540">
    <property type="entry name" value="PRK00366.1"/>
    <property type="match status" value="1"/>
</dbReference>
<dbReference type="PANTHER" id="PTHR30454">
    <property type="entry name" value="4-HYDROXY-3-METHYLBUT-2-EN-1-YL DIPHOSPHATE SYNTHASE"/>
    <property type="match status" value="1"/>
</dbReference>
<dbReference type="PANTHER" id="PTHR30454:SF0">
    <property type="entry name" value="4-HYDROXY-3-METHYLBUT-2-EN-1-YL DIPHOSPHATE SYNTHASE (FERREDOXIN), CHLOROPLASTIC"/>
    <property type="match status" value="1"/>
</dbReference>
<dbReference type="Pfam" id="PF04551">
    <property type="entry name" value="GcpE"/>
    <property type="match status" value="1"/>
</dbReference>
<dbReference type="PIRSF" id="PIRSF004640">
    <property type="entry name" value="IspG"/>
    <property type="match status" value="1"/>
</dbReference>
<dbReference type="SUPFAM" id="SSF51717">
    <property type="entry name" value="Dihydropteroate synthetase-like"/>
    <property type="match status" value="1"/>
</dbReference>
<dbReference type="SUPFAM" id="SSF56014">
    <property type="entry name" value="Nitrite and sulphite reductase 4Fe-4S domain-like"/>
    <property type="match status" value="1"/>
</dbReference>
<keyword id="KW-0004">4Fe-4S</keyword>
<keyword id="KW-0408">Iron</keyword>
<keyword id="KW-0411">Iron-sulfur</keyword>
<keyword id="KW-0414">Isoprene biosynthesis</keyword>
<keyword id="KW-0479">Metal-binding</keyword>
<keyword id="KW-0560">Oxidoreductase</keyword>
<comment type="function">
    <text evidence="1">Converts 2C-methyl-D-erythritol 2,4-cyclodiphosphate (ME-2,4cPP) into 1-hydroxy-2-methyl-2-(E)-butenyl 4-diphosphate.</text>
</comment>
<comment type="catalytic activity">
    <reaction evidence="1">
        <text>(2E)-4-hydroxy-3-methylbut-2-enyl diphosphate + oxidized [flavodoxin] + H2O + 2 H(+) = 2-C-methyl-D-erythritol 2,4-cyclic diphosphate + reduced [flavodoxin]</text>
        <dbReference type="Rhea" id="RHEA:43604"/>
        <dbReference type="Rhea" id="RHEA-COMP:10622"/>
        <dbReference type="Rhea" id="RHEA-COMP:10623"/>
        <dbReference type="ChEBI" id="CHEBI:15377"/>
        <dbReference type="ChEBI" id="CHEBI:15378"/>
        <dbReference type="ChEBI" id="CHEBI:57618"/>
        <dbReference type="ChEBI" id="CHEBI:58210"/>
        <dbReference type="ChEBI" id="CHEBI:58483"/>
        <dbReference type="ChEBI" id="CHEBI:128753"/>
        <dbReference type="EC" id="1.17.7.3"/>
    </reaction>
</comment>
<comment type="cofactor">
    <cofactor evidence="1">
        <name>[4Fe-4S] cluster</name>
        <dbReference type="ChEBI" id="CHEBI:49883"/>
    </cofactor>
    <text evidence="1">Binds 1 [4Fe-4S] cluster.</text>
</comment>
<comment type="pathway">
    <text evidence="1">Isoprenoid biosynthesis; isopentenyl diphosphate biosynthesis via DXP pathway; isopentenyl diphosphate from 1-deoxy-D-xylulose 5-phosphate: step 5/6.</text>
</comment>
<comment type="similarity">
    <text evidence="1">Belongs to the IspG family.</text>
</comment>